<feature type="chain" id="PRO_1000165163" description="Anhydro-N-acetylmuramic acid kinase">
    <location>
        <begin position="1"/>
        <end position="369"/>
    </location>
</feature>
<feature type="binding site" evidence="1">
    <location>
        <begin position="12"/>
        <end position="19"/>
    </location>
    <ligand>
        <name>ATP</name>
        <dbReference type="ChEBI" id="CHEBI:30616"/>
    </ligand>
</feature>
<comment type="function">
    <text evidence="1">Catalyzes the specific phosphorylation of 1,6-anhydro-N-acetylmuramic acid (anhMurNAc) with the simultaneous cleavage of the 1,6-anhydro ring, generating MurNAc-6-P. Is required for the utilization of anhMurNAc either imported from the medium or derived from its own cell wall murein, and thus plays a role in cell wall recycling.</text>
</comment>
<comment type="catalytic activity">
    <reaction evidence="1">
        <text>1,6-anhydro-N-acetyl-beta-muramate + ATP + H2O = N-acetyl-D-muramate 6-phosphate + ADP + H(+)</text>
        <dbReference type="Rhea" id="RHEA:24952"/>
        <dbReference type="ChEBI" id="CHEBI:15377"/>
        <dbReference type="ChEBI" id="CHEBI:15378"/>
        <dbReference type="ChEBI" id="CHEBI:30616"/>
        <dbReference type="ChEBI" id="CHEBI:58690"/>
        <dbReference type="ChEBI" id="CHEBI:58722"/>
        <dbReference type="ChEBI" id="CHEBI:456216"/>
        <dbReference type="EC" id="2.7.1.170"/>
    </reaction>
</comment>
<comment type="pathway">
    <text evidence="1">Amino-sugar metabolism; 1,6-anhydro-N-acetylmuramate degradation.</text>
</comment>
<comment type="pathway">
    <text evidence="1">Cell wall biogenesis; peptidoglycan recycling.</text>
</comment>
<comment type="similarity">
    <text evidence="1">Belongs to the anhydro-N-acetylmuramic acid kinase family.</text>
</comment>
<name>ANMK_ECO81</name>
<reference key="1">
    <citation type="journal article" date="2009" name="PLoS Genet.">
        <title>Organised genome dynamics in the Escherichia coli species results in highly diverse adaptive paths.</title>
        <authorList>
            <person name="Touchon M."/>
            <person name="Hoede C."/>
            <person name="Tenaillon O."/>
            <person name="Barbe V."/>
            <person name="Baeriswyl S."/>
            <person name="Bidet P."/>
            <person name="Bingen E."/>
            <person name="Bonacorsi S."/>
            <person name="Bouchier C."/>
            <person name="Bouvet O."/>
            <person name="Calteau A."/>
            <person name="Chiapello H."/>
            <person name="Clermont O."/>
            <person name="Cruveiller S."/>
            <person name="Danchin A."/>
            <person name="Diard M."/>
            <person name="Dossat C."/>
            <person name="Karoui M.E."/>
            <person name="Frapy E."/>
            <person name="Garry L."/>
            <person name="Ghigo J.M."/>
            <person name="Gilles A.M."/>
            <person name="Johnson J."/>
            <person name="Le Bouguenec C."/>
            <person name="Lescat M."/>
            <person name="Mangenot S."/>
            <person name="Martinez-Jehanne V."/>
            <person name="Matic I."/>
            <person name="Nassif X."/>
            <person name="Oztas S."/>
            <person name="Petit M.A."/>
            <person name="Pichon C."/>
            <person name="Rouy Z."/>
            <person name="Ruf C.S."/>
            <person name="Schneider D."/>
            <person name="Tourret J."/>
            <person name="Vacherie B."/>
            <person name="Vallenet D."/>
            <person name="Medigue C."/>
            <person name="Rocha E.P.C."/>
            <person name="Denamur E."/>
        </authorList>
    </citation>
    <scope>NUCLEOTIDE SEQUENCE [LARGE SCALE GENOMIC DNA]</scope>
    <source>
        <strain>ED1a</strain>
    </source>
</reference>
<keyword id="KW-0067">ATP-binding</keyword>
<keyword id="KW-0119">Carbohydrate metabolism</keyword>
<keyword id="KW-0418">Kinase</keyword>
<keyword id="KW-0547">Nucleotide-binding</keyword>
<keyword id="KW-0808">Transferase</keyword>
<organism>
    <name type="scientific">Escherichia coli O81 (strain ED1a)</name>
    <dbReference type="NCBI Taxonomy" id="585397"/>
    <lineage>
        <taxon>Bacteria</taxon>
        <taxon>Pseudomonadati</taxon>
        <taxon>Pseudomonadota</taxon>
        <taxon>Gammaproteobacteria</taxon>
        <taxon>Enterobacterales</taxon>
        <taxon>Enterobacteriaceae</taxon>
        <taxon>Escherichia</taxon>
    </lineage>
</organism>
<gene>
    <name evidence="1" type="primary">anmK</name>
    <name type="ordered locus">ECED1_1841</name>
</gene>
<proteinExistence type="inferred from homology"/>
<sequence length="369" mass="39540">MKSGRFIGVMSGTSLDGVDVVLATIDEHRVAQLASLSWPIPVSLKQAVLDICQGQQLTLSQFGQLDTQLGRLFADAVNALLKEQNLQARDIVAIGCHGQTVWHEPTGVAPHTLQIGDNNQIVARTGITVVGDFRRRDIALGGQGAPLVPAFHHALLAHPTERRMVLNIGGIANLSLLIPGQPVGGYDTGPGNMLMDAWIWRQAGKPYDKDAEWARAGKVILPLLQNMLCDPYFSQPAPKSTGREYFNYGWLERHLRHFPGVDPRDVQATLAELTAVTISEQVLLSGGCERLMVCGGGSRNPLLMARLAALLPGTEVTTTDAVGISGDDMEALAFAWLAWRTLAGLPGNLPSVTGASQETVLGAIFPANP</sequence>
<dbReference type="EC" id="2.7.1.170" evidence="1"/>
<dbReference type="EMBL" id="CU928162">
    <property type="protein sequence ID" value="CAR08034.2"/>
    <property type="molecule type" value="Genomic_DNA"/>
</dbReference>
<dbReference type="RefSeq" id="WP_000835063.1">
    <property type="nucleotide sequence ID" value="NC_011745.1"/>
</dbReference>
<dbReference type="SMR" id="B7MVB8"/>
<dbReference type="KEGG" id="ecq:ECED1_1841"/>
<dbReference type="HOGENOM" id="CLU_038782_0_0_6"/>
<dbReference type="UniPathway" id="UPA00343"/>
<dbReference type="UniPathway" id="UPA00544"/>
<dbReference type="Proteomes" id="UP000000748">
    <property type="component" value="Chromosome"/>
</dbReference>
<dbReference type="GO" id="GO:0005524">
    <property type="term" value="F:ATP binding"/>
    <property type="evidence" value="ECO:0007669"/>
    <property type="project" value="UniProtKB-UniRule"/>
</dbReference>
<dbReference type="GO" id="GO:0016301">
    <property type="term" value="F:kinase activity"/>
    <property type="evidence" value="ECO:0007669"/>
    <property type="project" value="UniProtKB-KW"/>
</dbReference>
<dbReference type="GO" id="GO:0016773">
    <property type="term" value="F:phosphotransferase activity, alcohol group as acceptor"/>
    <property type="evidence" value="ECO:0007669"/>
    <property type="project" value="UniProtKB-UniRule"/>
</dbReference>
<dbReference type="GO" id="GO:0097175">
    <property type="term" value="P:1,6-anhydro-N-acetyl-beta-muramic acid catabolic process"/>
    <property type="evidence" value="ECO:0007669"/>
    <property type="project" value="UniProtKB-UniRule"/>
</dbReference>
<dbReference type="GO" id="GO:0006040">
    <property type="term" value="P:amino sugar metabolic process"/>
    <property type="evidence" value="ECO:0007669"/>
    <property type="project" value="InterPro"/>
</dbReference>
<dbReference type="GO" id="GO:0009254">
    <property type="term" value="P:peptidoglycan turnover"/>
    <property type="evidence" value="ECO:0007669"/>
    <property type="project" value="UniProtKB-UniRule"/>
</dbReference>
<dbReference type="CDD" id="cd24050">
    <property type="entry name" value="ASKHA_NBD_ANMK"/>
    <property type="match status" value="1"/>
</dbReference>
<dbReference type="FunFam" id="3.30.420.40:FF:000090">
    <property type="entry name" value="Anhydro-N-acetylmuramic acid kinase"/>
    <property type="match status" value="1"/>
</dbReference>
<dbReference type="Gene3D" id="3.30.420.40">
    <property type="match status" value="2"/>
</dbReference>
<dbReference type="HAMAP" id="MF_01270">
    <property type="entry name" value="AnhMurNAc_kinase"/>
    <property type="match status" value="1"/>
</dbReference>
<dbReference type="InterPro" id="IPR005338">
    <property type="entry name" value="Anhydro_N_Ac-Mur_kinase"/>
</dbReference>
<dbReference type="InterPro" id="IPR043129">
    <property type="entry name" value="ATPase_NBD"/>
</dbReference>
<dbReference type="NCBIfam" id="NF007138">
    <property type="entry name" value="PRK09585.1-1"/>
    <property type="match status" value="1"/>
</dbReference>
<dbReference type="NCBIfam" id="NF007139">
    <property type="entry name" value="PRK09585.1-3"/>
    <property type="match status" value="1"/>
</dbReference>
<dbReference type="NCBIfam" id="NF007148">
    <property type="entry name" value="PRK09585.3-2"/>
    <property type="match status" value="1"/>
</dbReference>
<dbReference type="PANTHER" id="PTHR30605">
    <property type="entry name" value="ANHYDRO-N-ACETYLMURAMIC ACID KINASE"/>
    <property type="match status" value="1"/>
</dbReference>
<dbReference type="PANTHER" id="PTHR30605:SF0">
    <property type="entry name" value="ANHYDRO-N-ACETYLMURAMIC ACID KINASE"/>
    <property type="match status" value="1"/>
</dbReference>
<dbReference type="Pfam" id="PF03702">
    <property type="entry name" value="AnmK"/>
    <property type="match status" value="1"/>
</dbReference>
<dbReference type="SUPFAM" id="SSF53067">
    <property type="entry name" value="Actin-like ATPase domain"/>
    <property type="match status" value="1"/>
</dbReference>
<accession>B7MVB8</accession>
<evidence type="ECO:0000255" key="1">
    <source>
        <dbReference type="HAMAP-Rule" id="MF_01270"/>
    </source>
</evidence>
<protein>
    <recommendedName>
        <fullName evidence="1">Anhydro-N-acetylmuramic acid kinase</fullName>
        <ecNumber evidence="1">2.7.1.170</ecNumber>
    </recommendedName>
    <alternativeName>
        <fullName evidence="1">AnhMurNAc kinase</fullName>
    </alternativeName>
</protein>